<gene>
    <name evidence="1" type="primary">lipB</name>
    <name type="ordered locus">Pars_1183</name>
</gene>
<organism>
    <name type="scientific">Pyrobaculum arsenaticum (strain DSM 13514 / JCM 11321 / PZ6)</name>
    <dbReference type="NCBI Taxonomy" id="340102"/>
    <lineage>
        <taxon>Archaea</taxon>
        <taxon>Thermoproteota</taxon>
        <taxon>Thermoprotei</taxon>
        <taxon>Thermoproteales</taxon>
        <taxon>Thermoproteaceae</taxon>
        <taxon>Pyrobaculum</taxon>
    </lineage>
</organism>
<keyword id="KW-0012">Acyltransferase</keyword>
<keyword id="KW-0963">Cytoplasm</keyword>
<keyword id="KW-0808">Transferase</keyword>
<sequence length="212" mass="23901">MRIFILGRTKYQEAWALMKRIHDEVASGVSEEMILVTEHDHVITVGRHGRLNNVLRRELPIYVVERGGDATYHGPGQAVVYPVVRLRGGVRSYLWALEEAVIRTLDKYGISAGRREDHRGVWVGGKKIASVGIAVERGVAYHGVAVYVNPHMEYFYHINPCGLPPSVITSMRQLGVEADVFEVGYAVAANLETLLQRQERLKTRCESLRRIP</sequence>
<name>LIPB_PYRAR</name>
<reference key="1">
    <citation type="submission" date="2007-04" db="EMBL/GenBank/DDBJ databases">
        <title>Complete sequence of Pyrobaculum arsenaticum DSM 13514.</title>
        <authorList>
            <consortium name="US DOE Joint Genome Institute"/>
            <person name="Copeland A."/>
            <person name="Lucas S."/>
            <person name="Lapidus A."/>
            <person name="Barry K."/>
            <person name="Glavina del Rio T."/>
            <person name="Dalin E."/>
            <person name="Tice H."/>
            <person name="Pitluck S."/>
            <person name="Chain P."/>
            <person name="Malfatti S."/>
            <person name="Shin M."/>
            <person name="Vergez L."/>
            <person name="Schmutz J."/>
            <person name="Larimer F."/>
            <person name="Land M."/>
            <person name="Hauser L."/>
            <person name="Kyrpides N."/>
            <person name="Mikhailova N."/>
            <person name="Cozen A.E."/>
            <person name="Fitz-Gibbon S.T."/>
            <person name="House C.H."/>
            <person name="Saltikov C."/>
            <person name="Lowe T.M."/>
            <person name="Richardson P."/>
        </authorList>
    </citation>
    <scope>NUCLEOTIDE SEQUENCE [LARGE SCALE GENOMIC DNA]</scope>
    <source>
        <strain>ATCC 700994 / DSM 13514 / JCM 11321 / PZ6</strain>
    </source>
</reference>
<evidence type="ECO:0000255" key="1">
    <source>
        <dbReference type="HAMAP-Rule" id="MF_00013"/>
    </source>
</evidence>
<evidence type="ECO:0000255" key="2">
    <source>
        <dbReference type="PROSITE-ProRule" id="PRU01067"/>
    </source>
</evidence>
<dbReference type="EC" id="2.3.1.181" evidence="1"/>
<dbReference type="EMBL" id="CP000660">
    <property type="protein sequence ID" value="ABP50754.1"/>
    <property type="molecule type" value="Genomic_DNA"/>
</dbReference>
<dbReference type="SMR" id="A4WK37"/>
<dbReference type="STRING" id="340102.Pars_1183"/>
<dbReference type="KEGG" id="pas:Pars_1183"/>
<dbReference type="HOGENOM" id="CLU_035168_3_0_2"/>
<dbReference type="OrthoDB" id="56985at2157"/>
<dbReference type="PhylomeDB" id="A4WK37"/>
<dbReference type="UniPathway" id="UPA00538">
    <property type="reaction ID" value="UER00592"/>
</dbReference>
<dbReference type="Proteomes" id="UP000001567">
    <property type="component" value="Chromosome"/>
</dbReference>
<dbReference type="GO" id="GO:0005737">
    <property type="term" value="C:cytoplasm"/>
    <property type="evidence" value="ECO:0007669"/>
    <property type="project" value="UniProtKB-SubCell"/>
</dbReference>
<dbReference type="GO" id="GO:0033819">
    <property type="term" value="F:lipoyl(octanoyl) transferase activity"/>
    <property type="evidence" value="ECO:0007669"/>
    <property type="project" value="UniProtKB-EC"/>
</dbReference>
<dbReference type="GO" id="GO:0036211">
    <property type="term" value="P:protein modification process"/>
    <property type="evidence" value="ECO:0007669"/>
    <property type="project" value="InterPro"/>
</dbReference>
<dbReference type="CDD" id="cd16444">
    <property type="entry name" value="LipB"/>
    <property type="match status" value="1"/>
</dbReference>
<dbReference type="Gene3D" id="3.30.930.10">
    <property type="entry name" value="Bira Bifunctional Protein, Domain 2"/>
    <property type="match status" value="1"/>
</dbReference>
<dbReference type="HAMAP" id="MF_00013">
    <property type="entry name" value="LipB"/>
    <property type="match status" value="1"/>
</dbReference>
<dbReference type="InterPro" id="IPR045864">
    <property type="entry name" value="aa-tRNA-synth_II/BPL/LPL"/>
</dbReference>
<dbReference type="InterPro" id="IPR004143">
    <property type="entry name" value="BPL_LPL_catalytic"/>
</dbReference>
<dbReference type="InterPro" id="IPR000544">
    <property type="entry name" value="Octanoyltransferase"/>
</dbReference>
<dbReference type="InterPro" id="IPR020605">
    <property type="entry name" value="Octanoyltransferase_CS"/>
</dbReference>
<dbReference type="NCBIfam" id="TIGR00214">
    <property type="entry name" value="lipB"/>
    <property type="match status" value="1"/>
</dbReference>
<dbReference type="PANTHER" id="PTHR10993:SF7">
    <property type="entry name" value="LIPOYLTRANSFERASE 2, MITOCHONDRIAL-RELATED"/>
    <property type="match status" value="1"/>
</dbReference>
<dbReference type="PANTHER" id="PTHR10993">
    <property type="entry name" value="OCTANOYLTRANSFERASE"/>
    <property type="match status" value="1"/>
</dbReference>
<dbReference type="Pfam" id="PF21948">
    <property type="entry name" value="LplA-B_cat"/>
    <property type="match status" value="1"/>
</dbReference>
<dbReference type="PIRSF" id="PIRSF016262">
    <property type="entry name" value="LPLase"/>
    <property type="match status" value="1"/>
</dbReference>
<dbReference type="SUPFAM" id="SSF55681">
    <property type="entry name" value="Class II aaRS and biotin synthetases"/>
    <property type="match status" value="1"/>
</dbReference>
<dbReference type="PROSITE" id="PS51733">
    <property type="entry name" value="BPL_LPL_CATALYTIC"/>
    <property type="match status" value="1"/>
</dbReference>
<dbReference type="PROSITE" id="PS01313">
    <property type="entry name" value="LIPB"/>
    <property type="match status" value="1"/>
</dbReference>
<protein>
    <recommendedName>
        <fullName evidence="1">Probable octanoyltransferase</fullName>
        <ecNumber evidence="1">2.3.1.181</ecNumber>
    </recommendedName>
    <alternativeName>
        <fullName evidence="1">Lipoate-protein ligase B</fullName>
    </alternativeName>
    <alternativeName>
        <fullName evidence="1">Lipoyl/octanoyl transferase</fullName>
    </alternativeName>
    <alternativeName>
        <fullName evidence="1">Octanoyl-[acyl-carrier-protein]-protein N-octanoyltransferase</fullName>
    </alternativeName>
</protein>
<feature type="chain" id="PRO_1000116551" description="Probable octanoyltransferase">
    <location>
        <begin position="1"/>
        <end position="212"/>
    </location>
</feature>
<feature type="domain" description="BPL/LPL catalytic" evidence="2">
    <location>
        <begin position="28"/>
        <end position="199"/>
    </location>
</feature>
<feature type="active site" description="Acyl-thioester intermediate" evidence="1">
    <location>
        <position position="161"/>
    </location>
</feature>
<feature type="binding site" evidence="1">
    <location>
        <begin position="66"/>
        <end position="73"/>
    </location>
    <ligand>
        <name>substrate</name>
    </ligand>
</feature>
<feature type="binding site" evidence="1">
    <location>
        <begin position="130"/>
        <end position="132"/>
    </location>
    <ligand>
        <name>substrate</name>
    </ligand>
</feature>
<feature type="binding site" evidence="1">
    <location>
        <begin position="143"/>
        <end position="145"/>
    </location>
    <ligand>
        <name>substrate</name>
    </ligand>
</feature>
<feature type="site" description="Lowers pKa of active site Cys" evidence="1">
    <location>
        <position position="127"/>
    </location>
</feature>
<accession>A4WK37</accession>
<comment type="function">
    <text evidence="1">Catalyzes the transfer of endogenously produced octanoic acid from octanoyl-acyl-carrier-protein onto the lipoyl domains of lipoate-dependent enzymes. Lipoyl-ACP can also act as a substrate although octanoyl-ACP is likely to be the physiological substrate.</text>
</comment>
<comment type="catalytic activity">
    <reaction evidence="1">
        <text>octanoyl-[ACP] + L-lysyl-[protein] = N(6)-octanoyl-L-lysyl-[protein] + holo-[ACP] + H(+)</text>
        <dbReference type="Rhea" id="RHEA:17665"/>
        <dbReference type="Rhea" id="RHEA-COMP:9636"/>
        <dbReference type="Rhea" id="RHEA-COMP:9685"/>
        <dbReference type="Rhea" id="RHEA-COMP:9752"/>
        <dbReference type="Rhea" id="RHEA-COMP:9928"/>
        <dbReference type="ChEBI" id="CHEBI:15378"/>
        <dbReference type="ChEBI" id="CHEBI:29969"/>
        <dbReference type="ChEBI" id="CHEBI:64479"/>
        <dbReference type="ChEBI" id="CHEBI:78463"/>
        <dbReference type="ChEBI" id="CHEBI:78809"/>
        <dbReference type="EC" id="2.3.1.181"/>
    </reaction>
</comment>
<comment type="pathway">
    <text evidence="1">Protein modification; protein lipoylation via endogenous pathway; protein N(6)-(lipoyl)lysine from octanoyl-[acyl-carrier-protein]: step 1/2.</text>
</comment>
<comment type="subcellular location">
    <subcellularLocation>
        <location evidence="1">Cytoplasm</location>
    </subcellularLocation>
</comment>
<comment type="miscellaneous">
    <text evidence="1">In the reaction, the free carboxyl group of octanoic acid is attached via an amide linkage to the epsilon-amino group of a specific lysine residue of lipoyl domains of lipoate-dependent enzymes.</text>
</comment>
<comment type="similarity">
    <text evidence="1">Belongs to the LipB family.</text>
</comment>
<proteinExistence type="inferred from homology"/>